<accession>Q9M9Q6</accession>
<comment type="function">
    <text evidence="1">Probable carboxypeptidase.</text>
</comment>
<comment type="subcellular location">
    <subcellularLocation>
        <location evidence="5">Secreted</location>
    </subcellularLocation>
</comment>
<comment type="tissue specificity">
    <text evidence="4">Ubiquitous.</text>
</comment>
<comment type="similarity">
    <text evidence="5">Belongs to the peptidase S10 family.</text>
</comment>
<reference key="1">
    <citation type="journal article" date="2000" name="Nature">
        <title>Sequence and analysis of chromosome 1 of the plant Arabidopsis thaliana.</title>
        <authorList>
            <person name="Theologis A."/>
            <person name="Ecker J.R."/>
            <person name="Palm C.J."/>
            <person name="Federspiel N.A."/>
            <person name="Kaul S."/>
            <person name="White O."/>
            <person name="Alonso J."/>
            <person name="Altafi H."/>
            <person name="Araujo R."/>
            <person name="Bowman C.L."/>
            <person name="Brooks S.Y."/>
            <person name="Buehler E."/>
            <person name="Chan A."/>
            <person name="Chao Q."/>
            <person name="Chen H."/>
            <person name="Cheuk R.F."/>
            <person name="Chin C.W."/>
            <person name="Chung M.K."/>
            <person name="Conn L."/>
            <person name="Conway A.B."/>
            <person name="Conway A.R."/>
            <person name="Creasy T.H."/>
            <person name="Dewar K."/>
            <person name="Dunn P."/>
            <person name="Etgu P."/>
            <person name="Feldblyum T.V."/>
            <person name="Feng J.-D."/>
            <person name="Fong B."/>
            <person name="Fujii C.Y."/>
            <person name="Gill J.E."/>
            <person name="Goldsmith A.D."/>
            <person name="Haas B."/>
            <person name="Hansen N.F."/>
            <person name="Hughes B."/>
            <person name="Huizar L."/>
            <person name="Hunter J.L."/>
            <person name="Jenkins J."/>
            <person name="Johnson-Hopson C."/>
            <person name="Khan S."/>
            <person name="Khaykin E."/>
            <person name="Kim C.J."/>
            <person name="Koo H.L."/>
            <person name="Kremenetskaia I."/>
            <person name="Kurtz D.B."/>
            <person name="Kwan A."/>
            <person name="Lam B."/>
            <person name="Langin-Hooper S."/>
            <person name="Lee A."/>
            <person name="Lee J.M."/>
            <person name="Lenz C.A."/>
            <person name="Li J.H."/>
            <person name="Li Y.-P."/>
            <person name="Lin X."/>
            <person name="Liu S.X."/>
            <person name="Liu Z.A."/>
            <person name="Luros J.S."/>
            <person name="Maiti R."/>
            <person name="Marziali A."/>
            <person name="Militscher J."/>
            <person name="Miranda M."/>
            <person name="Nguyen M."/>
            <person name="Nierman W.C."/>
            <person name="Osborne B.I."/>
            <person name="Pai G."/>
            <person name="Peterson J."/>
            <person name="Pham P.K."/>
            <person name="Rizzo M."/>
            <person name="Rooney T."/>
            <person name="Rowley D."/>
            <person name="Sakano H."/>
            <person name="Salzberg S.L."/>
            <person name="Schwartz J.R."/>
            <person name="Shinn P."/>
            <person name="Southwick A.M."/>
            <person name="Sun H."/>
            <person name="Tallon L.J."/>
            <person name="Tambunga G."/>
            <person name="Toriumi M.J."/>
            <person name="Town C.D."/>
            <person name="Utterback T."/>
            <person name="Van Aken S."/>
            <person name="Vaysberg M."/>
            <person name="Vysotskaia V.S."/>
            <person name="Walker M."/>
            <person name="Wu D."/>
            <person name="Yu G."/>
            <person name="Fraser C.M."/>
            <person name="Venter J.C."/>
            <person name="Davis R.W."/>
        </authorList>
    </citation>
    <scope>NUCLEOTIDE SEQUENCE [LARGE SCALE GENOMIC DNA]</scope>
    <source>
        <strain>cv. Columbia</strain>
    </source>
</reference>
<reference key="2">
    <citation type="journal article" date="2017" name="Plant J.">
        <title>Araport11: a complete reannotation of the Arabidopsis thaliana reference genome.</title>
        <authorList>
            <person name="Cheng C.Y."/>
            <person name="Krishnakumar V."/>
            <person name="Chan A.P."/>
            <person name="Thibaud-Nissen F."/>
            <person name="Schobel S."/>
            <person name="Town C.D."/>
        </authorList>
    </citation>
    <scope>GENOME REANNOTATION</scope>
    <source>
        <strain>cv. Columbia</strain>
    </source>
</reference>
<reference key="3">
    <citation type="journal article" date="2003" name="Science">
        <title>Empirical analysis of transcriptional activity in the Arabidopsis genome.</title>
        <authorList>
            <person name="Yamada K."/>
            <person name="Lim J."/>
            <person name="Dale J.M."/>
            <person name="Chen H."/>
            <person name="Shinn P."/>
            <person name="Palm C.J."/>
            <person name="Southwick A.M."/>
            <person name="Wu H.C."/>
            <person name="Kim C.J."/>
            <person name="Nguyen M."/>
            <person name="Pham P.K."/>
            <person name="Cheuk R.F."/>
            <person name="Karlin-Newmann G."/>
            <person name="Liu S.X."/>
            <person name="Lam B."/>
            <person name="Sakano H."/>
            <person name="Wu T."/>
            <person name="Yu G."/>
            <person name="Miranda M."/>
            <person name="Quach H.L."/>
            <person name="Tripp M."/>
            <person name="Chang C.H."/>
            <person name="Lee J.M."/>
            <person name="Toriumi M.J."/>
            <person name="Chan M.M."/>
            <person name="Tang C.C."/>
            <person name="Onodera C.S."/>
            <person name="Deng J.M."/>
            <person name="Akiyama K."/>
            <person name="Ansari Y."/>
            <person name="Arakawa T."/>
            <person name="Banh J."/>
            <person name="Banno F."/>
            <person name="Bowser L."/>
            <person name="Brooks S.Y."/>
            <person name="Carninci P."/>
            <person name="Chao Q."/>
            <person name="Choy N."/>
            <person name="Enju A."/>
            <person name="Goldsmith A.D."/>
            <person name="Gurjal M."/>
            <person name="Hansen N.F."/>
            <person name="Hayashizaki Y."/>
            <person name="Johnson-Hopson C."/>
            <person name="Hsuan V.W."/>
            <person name="Iida K."/>
            <person name="Karnes M."/>
            <person name="Khan S."/>
            <person name="Koesema E."/>
            <person name="Ishida J."/>
            <person name="Jiang P.X."/>
            <person name="Jones T."/>
            <person name="Kawai J."/>
            <person name="Kamiya A."/>
            <person name="Meyers C."/>
            <person name="Nakajima M."/>
            <person name="Narusaka M."/>
            <person name="Seki M."/>
            <person name="Sakurai T."/>
            <person name="Satou M."/>
            <person name="Tamse R."/>
            <person name="Vaysberg M."/>
            <person name="Wallender E.K."/>
            <person name="Wong C."/>
            <person name="Yamamura Y."/>
            <person name="Yuan S."/>
            <person name="Shinozaki K."/>
            <person name="Davis R.W."/>
            <person name="Theologis A."/>
            <person name="Ecker J.R."/>
        </authorList>
    </citation>
    <scope>NUCLEOTIDE SEQUENCE [LARGE SCALE MRNA]</scope>
    <source>
        <strain>cv. Columbia</strain>
    </source>
</reference>
<reference key="4">
    <citation type="journal article" date="2005" name="Plant Physiol.">
        <title>An expression and bioinformatics analysis of the Arabidopsis serine carboxypeptidase-like gene family.</title>
        <authorList>
            <person name="Fraser C.M."/>
            <person name="Rider L.W."/>
            <person name="Chapple C."/>
        </authorList>
    </citation>
    <scope>GENE FAMILY</scope>
    <scope>TISSUE SPECIFICITY</scope>
    <scope>NOMENCLATURE</scope>
</reference>
<protein>
    <recommendedName>
        <fullName>Serine carboxypeptidase-like 50</fullName>
        <ecNumber>3.4.16.-</ecNumber>
    </recommendedName>
</protein>
<organism>
    <name type="scientific">Arabidopsis thaliana</name>
    <name type="common">Mouse-ear cress</name>
    <dbReference type="NCBI Taxonomy" id="3702"/>
    <lineage>
        <taxon>Eukaryota</taxon>
        <taxon>Viridiplantae</taxon>
        <taxon>Streptophyta</taxon>
        <taxon>Embryophyta</taxon>
        <taxon>Tracheophyta</taxon>
        <taxon>Spermatophyta</taxon>
        <taxon>Magnoliopsida</taxon>
        <taxon>eudicotyledons</taxon>
        <taxon>Gunneridae</taxon>
        <taxon>Pentapetalae</taxon>
        <taxon>rosids</taxon>
        <taxon>malvids</taxon>
        <taxon>Brassicales</taxon>
        <taxon>Brassicaceae</taxon>
        <taxon>Camelineae</taxon>
        <taxon>Arabidopsis</taxon>
    </lineage>
</organism>
<evidence type="ECO:0000250" key="1"/>
<evidence type="ECO:0000255" key="2"/>
<evidence type="ECO:0000255" key="3">
    <source>
        <dbReference type="PROSITE-ProRule" id="PRU10075"/>
    </source>
</evidence>
<evidence type="ECO:0000269" key="4">
    <source>
    </source>
</evidence>
<evidence type="ECO:0000305" key="5"/>
<proteinExistence type="evidence at transcript level"/>
<dbReference type="EC" id="3.4.16.-"/>
<dbReference type="EMBL" id="AC012189">
    <property type="protein sequence ID" value="AAF31022.1"/>
    <property type="molecule type" value="Genomic_DNA"/>
</dbReference>
<dbReference type="EMBL" id="CP002684">
    <property type="protein sequence ID" value="AEE29252.1"/>
    <property type="molecule type" value="Genomic_DNA"/>
</dbReference>
<dbReference type="EMBL" id="AY075612">
    <property type="protein sequence ID" value="AAL91626.1"/>
    <property type="molecule type" value="mRNA"/>
</dbReference>
<dbReference type="EMBL" id="BT002620">
    <property type="protein sequence ID" value="AAO11536.1"/>
    <property type="molecule type" value="mRNA"/>
</dbReference>
<dbReference type="PIR" id="D86283">
    <property type="entry name" value="D86283"/>
</dbReference>
<dbReference type="RefSeq" id="NP_172953.1">
    <property type="nucleotide sequence ID" value="NM_101369.2"/>
</dbReference>
<dbReference type="SMR" id="Q9M9Q6"/>
<dbReference type="FunCoup" id="Q9M9Q6">
    <property type="interactions" value="64"/>
</dbReference>
<dbReference type="STRING" id="3702.Q9M9Q6"/>
<dbReference type="ESTHER" id="arath-SCP50">
    <property type="family name" value="Carboxypeptidase_S10"/>
</dbReference>
<dbReference type="MEROPS" id="S10.003"/>
<dbReference type="GlyCosmos" id="Q9M9Q6">
    <property type="glycosylation" value="2 sites, No reported glycans"/>
</dbReference>
<dbReference type="GlyGen" id="Q9M9Q6">
    <property type="glycosylation" value="2 sites"/>
</dbReference>
<dbReference type="PaxDb" id="3702-AT1G15000.1"/>
<dbReference type="ProteomicsDB" id="226606"/>
<dbReference type="EnsemblPlants" id="AT1G15000.1">
    <property type="protein sequence ID" value="AT1G15000.1"/>
    <property type="gene ID" value="AT1G15000"/>
</dbReference>
<dbReference type="GeneID" id="838065"/>
<dbReference type="Gramene" id="AT1G15000.1">
    <property type="protein sequence ID" value="AT1G15000.1"/>
    <property type="gene ID" value="AT1G15000"/>
</dbReference>
<dbReference type="KEGG" id="ath:AT1G15000"/>
<dbReference type="Araport" id="AT1G15000"/>
<dbReference type="TAIR" id="AT1G15000">
    <property type="gene designation" value="SCPL50"/>
</dbReference>
<dbReference type="eggNOG" id="KOG1282">
    <property type="taxonomic scope" value="Eukaryota"/>
</dbReference>
<dbReference type="HOGENOM" id="CLU_008523_10_1_1"/>
<dbReference type="InParanoid" id="Q9M9Q6"/>
<dbReference type="OMA" id="WYYNYLQ"/>
<dbReference type="OrthoDB" id="443318at2759"/>
<dbReference type="PhylomeDB" id="Q9M9Q6"/>
<dbReference type="PRO" id="PR:Q9M9Q6"/>
<dbReference type="Proteomes" id="UP000006548">
    <property type="component" value="Chromosome 1"/>
</dbReference>
<dbReference type="ExpressionAtlas" id="Q9M9Q6">
    <property type="expression patterns" value="baseline and differential"/>
</dbReference>
<dbReference type="GO" id="GO:0005576">
    <property type="term" value="C:extracellular region"/>
    <property type="evidence" value="ECO:0007669"/>
    <property type="project" value="UniProtKB-SubCell"/>
</dbReference>
<dbReference type="GO" id="GO:0000325">
    <property type="term" value="C:plant-type vacuole"/>
    <property type="evidence" value="ECO:0007005"/>
    <property type="project" value="TAIR"/>
</dbReference>
<dbReference type="GO" id="GO:0004185">
    <property type="term" value="F:serine-type carboxypeptidase activity"/>
    <property type="evidence" value="ECO:0007669"/>
    <property type="project" value="InterPro"/>
</dbReference>
<dbReference type="GO" id="GO:0006508">
    <property type="term" value="P:proteolysis"/>
    <property type="evidence" value="ECO:0007669"/>
    <property type="project" value="UniProtKB-KW"/>
</dbReference>
<dbReference type="FunFam" id="3.40.50.1820:FF:000163">
    <property type="entry name" value="Carboxypeptidase"/>
    <property type="match status" value="1"/>
</dbReference>
<dbReference type="Gene3D" id="3.40.50.1820">
    <property type="entry name" value="alpha/beta hydrolase"/>
    <property type="match status" value="1"/>
</dbReference>
<dbReference type="InterPro" id="IPR029058">
    <property type="entry name" value="AB_hydrolase_fold"/>
</dbReference>
<dbReference type="InterPro" id="IPR001563">
    <property type="entry name" value="Peptidase_S10"/>
</dbReference>
<dbReference type="InterPro" id="IPR033124">
    <property type="entry name" value="Ser_caboxypep_his_AS"/>
</dbReference>
<dbReference type="PANTHER" id="PTHR11802:SF454">
    <property type="entry name" value="SERINE CARBOXYPEPTIDASE-LIKE 50"/>
    <property type="match status" value="1"/>
</dbReference>
<dbReference type="PANTHER" id="PTHR11802">
    <property type="entry name" value="SERINE PROTEASE FAMILY S10 SERINE CARBOXYPEPTIDASE"/>
    <property type="match status" value="1"/>
</dbReference>
<dbReference type="Pfam" id="PF00450">
    <property type="entry name" value="Peptidase_S10"/>
    <property type="match status" value="1"/>
</dbReference>
<dbReference type="PRINTS" id="PR00724">
    <property type="entry name" value="CRBOXYPTASEC"/>
</dbReference>
<dbReference type="SUPFAM" id="SSF53474">
    <property type="entry name" value="alpha/beta-Hydrolases"/>
    <property type="match status" value="1"/>
</dbReference>
<dbReference type="PROSITE" id="PS00560">
    <property type="entry name" value="CARBOXYPEPT_SER_HIS"/>
    <property type="match status" value="1"/>
</dbReference>
<keyword id="KW-0121">Carboxypeptidase</keyword>
<keyword id="KW-1015">Disulfide bond</keyword>
<keyword id="KW-0325">Glycoprotein</keyword>
<keyword id="KW-0378">Hydrolase</keyword>
<keyword id="KW-0645">Protease</keyword>
<keyword id="KW-1185">Reference proteome</keyword>
<keyword id="KW-0964">Secreted</keyword>
<keyword id="KW-0732">Signal</keyword>
<feature type="signal peptide" evidence="2">
    <location>
        <begin position="1"/>
        <end position="22"/>
    </location>
</feature>
<feature type="chain" id="PRO_0000274664" description="Serine carboxypeptidase-like 50">
    <location>
        <begin position="23"/>
        <end position="444"/>
    </location>
</feature>
<feature type="active site" evidence="3">
    <location>
        <position position="170"/>
    </location>
</feature>
<feature type="active site" evidence="3">
    <location>
        <position position="345"/>
    </location>
</feature>
<feature type="active site" evidence="3">
    <location>
        <position position="403"/>
    </location>
</feature>
<feature type="glycosylation site" description="N-linked (GlcNAc...) asparagine" evidence="2">
    <location>
        <position position="263"/>
    </location>
</feature>
<feature type="glycosylation site" description="N-linked (GlcNAc...) asparagine" evidence="2">
    <location>
        <position position="361"/>
    </location>
</feature>
<feature type="disulfide bond" evidence="1">
    <location>
        <begin position="79"/>
        <end position="308"/>
    </location>
</feature>
<gene>
    <name type="primary">SCPL50</name>
    <name type="ordered locus">At1g15000</name>
    <name type="ORF">T15D22.4</name>
    <name type="ORF">T15D22.7</name>
</gene>
<name>SCP50_ARATH</name>
<sequence>MEQATTLFILLSTLLLAVSVESPQPPLFPDEALPTKSGYLPVKPAPGSSMFYAFYEAQEPTTPLPDTPLLVWLQGGPGCSSMIGNFYELGPWRVVSRATDLERNPGAWNRLFGLLFVDNPIGVGFSIAASQQDIPTNQRQVAEHLYAALVEFLEQNPSFENRPVYFTGESYAGKYVPAIGYYILKEKPNGKVNLKGLAIGNGLTDPVTQVQTHAVNVYYSGLVNAKQRVELQKAQEISVALVKSQKWREAADARTELLTLLSNMTGLATLYNTARAIPYRTDLVVDLLNQREAKRVLGVSETVRFEECSDEVEDVLRADVMKSVKFMVEYALERTQVLLYQGMLDLRDGVVSTEEWMKTMNWSGLGMFSTAERRVWKDEDGVVAGYVQRWGNLCHVAVTGAGHFVPTDKAVNSRDMIEGWVLGKGLFGGKDVKQTTSSSLYHSI</sequence>